<accession>P36967</accession>
<accession>Q54HN8</accession>
<gene>
    <name type="primary">scsA</name>
    <name type="ORF">DDB_G0289325</name>
</gene>
<proteinExistence type="evidence at protein level"/>
<dbReference type="EC" id="6.2.1.4" evidence="1 4"/>
<dbReference type="EC" id="6.2.1.5" evidence="1"/>
<dbReference type="EMBL" id="U23408">
    <property type="protein sequence ID" value="AAA85724.1"/>
    <property type="status" value="ALT_FRAME"/>
    <property type="molecule type" value="mRNA"/>
</dbReference>
<dbReference type="EMBL" id="AAFI02000139">
    <property type="protein sequence ID" value="EAL62749.1"/>
    <property type="molecule type" value="Genomic_DNA"/>
</dbReference>
<dbReference type="PIR" id="S29826">
    <property type="entry name" value="S29826"/>
</dbReference>
<dbReference type="PIR" id="S65966">
    <property type="entry name" value="S65966"/>
</dbReference>
<dbReference type="RefSeq" id="XP_636263.1">
    <property type="nucleotide sequence ID" value="XM_631171.1"/>
</dbReference>
<dbReference type="SMR" id="P36967"/>
<dbReference type="FunCoup" id="P36967">
    <property type="interactions" value="794"/>
</dbReference>
<dbReference type="STRING" id="44689.P36967"/>
<dbReference type="PaxDb" id="44689-DDB0191520"/>
<dbReference type="EnsemblProtists" id="EAL62749">
    <property type="protein sequence ID" value="EAL62749"/>
    <property type="gene ID" value="DDB_G0289325"/>
</dbReference>
<dbReference type="GeneID" id="8627082"/>
<dbReference type="KEGG" id="ddi:DDB_G0289325"/>
<dbReference type="dictyBase" id="DDB_G0289325">
    <property type="gene designation" value="scsA"/>
</dbReference>
<dbReference type="VEuPathDB" id="AmoebaDB:DDB_G0289325"/>
<dbReference type="eggNOG" id="KOG1255">
    <property type="taxonomic scope" value="Eukaryota"/>
</dbReference>
<dbReference type="HOGENOM" id="CLU_052104_0_0_1"/>
<dbReference type="InParanoid" id="P36967"/>
<dbReference type="OMA" id="VIICITE"/>
<dbReference type="PhylomeDB" id="P36967"/>
<dbReference type="Reactome" id="R-DDI-71403">
    <property type="pathway name" value="Citric acid cycle (TCA cycle)"/>
</dbReference>
<dbReference type="UniPathway" id="UPA00223">
    <property type="reaction ID" value="UER00999"/>
</dbReference>
<dbReference type="PRO" id="PR:P36967"/>
<dbReference type="Proteomes" id="UP000002195">
    <property type="component" value="Chromosome 5"/>
</dbReference>
<dbReference type="GO" id="GO:0016020">
    <property type="term" value="C:membrane"/>
    <property type="evidence" value="ECO:0000314"/>
    <property type="project" value="dictyBase"/>
</dbReference>
<dbReference type="GO" id="GO:0005739">
    <property type="term" value="C:mitochondrion"/>
    <property type="evidence" value="ECO:0000318"/>
    <property type="project" value="GO_Central"/>
</dbReference>
<dbReference type="GO" id="GO:0009361">
    <property type="term" value="C:succinate-CoA ligase complex (ADP-forming)"/>
    <property type="evidence" value="ECO:0000318"/>
    <property type="project" value="GO_Central"/>
</dbReference>
<dbReference type="GO" id="GO:0000166">
    <property type="term" value="F:nucleotide binding"/>
    <property type="evidence" value="ECO:0007669"/>
    <property type="project" value="UniProtKB-KW"/>
</dbReference>
<dbReference type="GO" id="GO:0004775">
    <property type="term" value="F:succinate-CoA ligase (ADP-forming) activity"/>
    <property type="evidence" value="ECO:0000318"/>
    <property type="project" value="GO_Central"/>
</dbReference>
<dbReference type="GO" id="GO:0004776">
    <property type="term" value="F:succinate-CoA ligase (GDP-forming) activity"/>
    <property type="evidence" value="ECO:0000314"/>
    <property type="project" value="dictyBase"/>
</dbReference>
<dbReference type="GO" id="GO:0006104">
    <property type="term" value="P:succinyl-CoA metabolic process"/>
    <property type="evidence" value="ECO:0000304"/>
    <property type="project" value="dictyBase"/>
</dbReference>
<dbReference type="GO" id="GO:0006099">
    <property type="term" value="P:tricarboxylic acid cycle"/>
    <property type="evidence" value="ECO:0000318"/>
    <property type="project" value="GO_Central"/>
</dbReference>
<dbReference type="FunFam" id="3.40.50.720:FF:000002">
    <property type="entry name" value="Succinate--CoA ligase [ADP-forming] subunit alpha"/>
    <property type="match status" value="1"/>
</dbReference>
<dbReference type="FunFam" id="3.40.50.261:FF:000005">
    <property type="entry name" value="Succinate--CoA ligase [ADP-forming] subunit alpha, mitochondrial"/>
    <property type="match status" value="1"/>
</dbReference>
<dbReference type="Gene3D" id="3.40.50.720">
    <property type="entry name" value="NAD(P)-binding Rossmann-like Domain"/>
    <property type="match status" value="1"/>
</dbReference>
<dbReference type="Gene3D" id="3.40.50.261">
    <property type="entry name" value="Succinyl-CoA synthetase domains"/>
    <property type="match status" value="1"/>
</dbReference>
<dbReference type="HAMAP" id="MF_01988">
    <property type="entry name" value="Succ_CoA_alpha"/>
    <property type="match status" value="1"/>
</dbReference>
<dbReference type="InterPro" id="IPR017440">
    <property type="entry name" value="Cit_synth/succinyl-CoA_lig_AS"/>
</dbReference>
<dbReference type="InterPro" id="IPR033847">
    <property type="entry name" value="Citrt_syn/SCS-alpha_CS"/>
</dbReference>
<dbReference type="InterPro" id="IPR003781">
    <property type="entry name" value="CoA-bd"/>
</dbReference>
<dbReference type="InterPro" id="IPR005810">
    <property type="entry name" value="CoA_lig_alpha"/>
</dbReference>
<dbReference type="InterPro" id="IPR036291">
    <property type="entry name" value="NAD(P)-bd_dom_sf"/>
</dbReference>
<dbReference type="InterPro" id="IPR005811">
    <property type="entry name" value="SUCC_ACL_C"/>
</dbReference>
<dbReference type="InterPro" id="IPR016102">
    <property type="entry name" value="Succinyl-CoA_synth-like"/>
</dbReference>
<dbReference type="NCBIfam" id="NF004230">
    <property type="entry name" value="PRK05678.1"/>
    <property type="match status" value="1"/>
</dbReference>
<dbReference type="NCBIfam" id="TIGR01019">
    <property type="entry name" value="sucCoAalpha"/>
    <property type="match status" value="1"/>
</dbReference>
<dbReference type="PANTHER" id="PTHR11117:SF2">
    <property type="entry name" value="SUCCINATE--COA LIGASE [ADP_GDP-FORMING] SUBUNIT ALPHA, MITOCHONDRIAL"/>
    <property type="match status" value="1"/>
</dbReference>
<dbReference type="PANTHER" id="PTHR11117">
    <property type="entry name" value="SUCCINYL-COA LIGASE SUBUNIT ALPHA"/>
    <property type="match status" value="1"/>
</dbReference>
<dbReference type="Pfam" id="PF02629">
    <property type="entry name" value="CoA_binding"/>
    <property type="match status" value="1"/>
</dbReference>
<dbReference type="Pfam" id="PF00549">
    <property type="entry name" value="Ligase_CoA"/>
    <property type="match status" value="1"/>
</dbReference>
<dbReference type="PIRSF" id="PIRSF001553">
    <property type="entry name" value="SucCS_alpha"/>
    <property type="match status" value="1"/>
</dbReference>
<dbReference type="PRINTS" id="PR01798">
    <property type="entry name" value="SCOASYNTHASE"/>
</dbReference>
<dbReference type="SMART" id="SM00881">
    <property type="entry name" value="CoA_binding"/>
    <property type="match status" value="1"/>
</dbReference>
<dbReference type="SUPFAM" id="SSF51735">
    <property type="entry name" value="NAD(P)-binding Rossmann-fold domains"/>
    <property type="match status" value="1"/>
</dbReference>
<dbReference type="SUPFAM" id="SSF52210">
    <property type="entry name" value="Succinyl-CoA synthetase domains"/>
    <property type="match status" value="1"/>
</dbReference>
<dbReference type="PROSITE" id="PS01216">
    <property type="entry name" value="SUCCINYL_COA_LIG_1"/>
    <property type="match status" value="1"/>
</dbReference>
<dbReference type="PROSITE" id="PS00399">
    <property type="entry name" value="SUCCINYL_COA_LIG_2"/>
    <property type="match status" value="1"/>
</dbReference>
<evidence type="ECO:0000255" key="1">
    <source>
        <dbReference type="HAMAP-Rule" id="MF_03222"/>
    </source>
</evidence>
<evidence type="ECO:0000269" key="2">
    <source>
    </source>
</evidence>
<evidence type="ECO:0000305" key="3"/>
<evidence type="ECO:0000305" key="4">
    <source>
    </source>
</evidence>
<comment type="function">
    <text evidence="1">Succinyl-CoA synthetase functions in the citric acid cycle (TCA), coupling the hydrolysis of succinyl-CoA to the synthesis of either ATP or GTP and thus represents the only step of substrate-level phosphorylation in the TCA. The alpha subunit of the enzyme binds the substrates coenzyme A and phosphate, while succinate binding and specificity for either ATP or GTP is provided by different beta subunits.</text>
</comment>
<comment type="catalytic activity">
    <reaction evidence="1 4">
        <text>GTP + succinate + CoA = succinyl-CoA + GDP + phosphate</text>
        <dbReference type="Rhea" id="RHEA:22120"/>
        <dbReference type="ChEBI" id="CHEBI:30031"/>
        <dbReference type="ChEBI" id="CHEBI:37565"/>
        <dbReference type="ChEBI" id="CHEBI:43474"/>
        <dbReference type="ChEBI" id="CHEBI:57287"/>
        <dbReference type="ChEBI" id="CHEBI:57292"/>
        <dbReference type="ChEBI" id="CHEBI:58189"/>
        <dbReference type="EC" id="6.2.1.4"/>
    </reaction>
</comment>
<comment type="catalytic activity">
    <reaction evidence="1">
        <text>succinate + ATP + CoA = succinyl-CoA + ADP + phosphate</text>
        <dbReference type="Rhea" id="RHEA:17661"/>
        <dbReference type="ChEBI" id="CHEBI:30031"/>
        <dbReference type="ChEBI" id="CHEBI:30616"/>
        <dbReference type="ChEBI" id="CHEBI:43474"/>
        <dbReference type="ChEBI" id="CHEBI:57287"/>
        <dbReference type="ChEBI" id="CHEBI:57292"/>
        <dbReference type="ChEBI" id="CHEBI:456216"/>
        <dbReference type="EC" id="6.2.1.5"/>
    </reaction>
</comment>
<comment type="pathway">
    <text evidence="1">Carbohydrate metabolism; tricarboxylic acid cycle; succinate from succinyl-CoA (ligase route): step 1/1.</text>
</comment>
<comment type="subunit">
    <text evidence="1">Heterodimer of an alpha and a beta subunit. Different beta subunits determine nucleotide specificity. Together with an ATP-specific beta subunit, forms an ADP-forming succinyl-CoA synthetase (A-SCS). Together with a GTP-specific beta subunit forms a GDP-forming succinyl-CoA synthetase (G-SCS).</text>
</comment>
<comment type="subcellular location">
    <subcellularLocation>
        <location evidence="1">Mitochondrion</location>
    </subcellularLocation>
</comment>
<comment type="PTM">
    <text evidence="2">Phosphorylated; stimulation by low concentration of GDP.</text>
</comment>
<comment type="similarity">
    <text evidence="1">Belongs to the succinate/malate CoA ligase alpha subunit family.</text>
</comment>
<comment type="sequence caution" evidence="3">
    <conflict type="frameshift">
        <sequence resource="EMBL-CDS" id="AAA85724"/>
    </conflict>
</comment>
<reference key="1">
    <citation type="journal article" date="1995" name="Arch. Biochem. Biophys.">
        <title>Cloning and expression of the alpha subunit of succinyl-CoA synthetase from Dictyostelium discoideum.</title>
        <authorList>
            <person name="Birney M.A."/>
            <person name="Klein C."/>
        </authorList>
    </citation>
    <scope>NUCLEOTIDE SEQUENCE [MRNA]</scope>
    <source>
        <strain>AX2</strain>
    </source>
</reference>
<reference key="2">
    <citation type="journal article" date="2005" name="Nature">
        <title>The genome of the social amoeba Dictyostelium discoideum.</title>
        <authorList>
            <person name="Eichinger L."/>
            <person name="Pachebat J.A."/>
            <person name="Gloeckner G."/>
            <person name="Rajandream M.A."/>
            <person name="Sucgang R."/>
            <person name="Berriman M."/>
            <person name="Song J."/>
            <person name="Olsen R."/>
            <person name="Szafranski K."/>
            <person name="Xu Q."/>
            <person name="Tunggal B."/>
            <person name="Kummerfeld S."/>
            <person name="Madera M."/>
            <person name="Konfortov B.A."/>
            <person name="Rivero F."/>
            <person name="Bankier A.T."/>
            <person name="Lehmann R."/>
            <person name="Hamlin N."/>
            <person name="Davies R."/>
            <person name="Gaudet P."/>
            <person name="Fey P."/>
            <person name="Pilcher K."/>
            <person name="Chen G."/>
            <person name="Saunders D."/>
            <person name="Sodergren E.J."/>
            <person name="Davis P."/>
            <person name="Kerhornou A."/>
            <person name="Nie X."/>
            <person name="Hall N."/>
            <person name="Anjard C."/>
            <person name="Hemphill L."/>
            <person name="Bason N."/>
            <person name="Farbrother P."/>
            <person name="Desany B."/>
            <person name="Just E."/>
            <person name="Morio T."/>
            <person name="Rost R."/>
            <person name="Churcher C.M."/>
            <person name="Cooper J."/>
            <person name="Haydock S."/>
            <person name="van Driessche N."/>
            <person name="Cronin A."/>
            <person name="Goodhead I."/>
            <person name="Muzny D.M."/>
            <person name="Mourier T."/>
            <person name="Pain A."/>
            <person name="Lu M."/>
            <person name="Harper D."/>
            <person name="Lindsay R."/>
            <person name="Hauser H."/>
            <person name="James K.D."/>
            <person name="Quiles M."/>
            <person name="Madan Babu M."/>
            <person name="Saito T."/>
            <person name="Buchrieser C."/>
            <person name="Wardroper A."/>
            <person name="Felder M."/>
            <person name="Thangavelu M."/>
            <person name="Johnson D."/>
            <person name="Knights A."/>
            <person name="Loulseged H."/>
            <person name="Mungall K.L."/>
            <person name="Oliver K."/>
            <person name="Price C."/>
            <person name="Quail M.A."/>
            <person name="Urushihara H."/>
            <person name="Hernandez J."/>
            <person name="Rabbinowitsch E."/>
            <person name="Steffen D."/>
            <person name="Sanders M."/>
            <person name="Ma J."/>
            <person name="Kohara Y."/>
            <person name="Sharp S."/>
            <person name="Simmonds M.N."/>
            <person name="Spiegler S."/>
            <person name="Tivey A."/>
            <person name="Sugano S."/>
            <person name="White B."/>
            <person name="Walker D."/>
            <person name="Woodward J.R."/>
            <person name="Winckler T."/>
            <person name="Tanaka Y."/>
            <person name="Shaulsky G."/>
            <person name="Schleicher M."/>
            <person name="Weinstock G.M."/>
            <person name="Rosenthal A."/>
            <person name="Cox E.C."/>
            <person name="Chisholm R.L."/>
            <person name="Gibbs R.A."/>
            <person name="Loomis W.F."/>
            <person name="Platzer M."/>
            <person name="Kay R.R."/>
            <person name="Williams J.G."/>
            <person name="Dear P.H."/>
            <person name="Noegel A.A."/>
            <person name="Barrell B.G."/>
            <person name="Kuspa A."/>
        </authorList>
    </citation>
    <scope>NUCLEOTIDE SEQUENCE [LARGE SCALE GENOMIC DNA]</scope>
    <source>
        <strain>AX4</strain>
    </source>
</reference>
<reference key="3">
    <citation type="journal article" date="1993" name="Biochim. Biophys. Acta">
        <title>P36, a Dictyostelium discoideum protein whose phosphorylation is stimulated by GDP, is homologous to the alpha-subunit of succinyl-CoA synthetase.</title>
        <authorList>
            <person name="Anschutz A.L."/>
            <person name="Um H.-D."/>
            <person name="Siegel N.R."/>
            <person name="Veron M."/>
            <person name="Klein C."/>
        </authorList>
    </citation>
    <scope>PROTEIN SEQUENCE OF 17-35; 67-75 AND 81-93</scope>
    <scope>PHOSPHORYLATION</scope>
</reference>
<keyword id="KW-0903">Direct protein sequencing</keyword>
<keyword id="KW-0436">Ligase</keyword>
<keyword id="KW-0496">Mitochondrion</keyword>
<keyword id="KW-0547">Nucleotide-binding</keyword>
<keyword id="KW-0597">Phosphoprotein</keyword>
<keyword id="KW-1185">Reference proteome</keyword>
<keyword id="KW-0809">Transit peptide</keyword>
<keyword id="KW-0816">Tricarboxylic acid cycle</keyword>
<name>SUCA_DICDI</name>
<sequence>MISAGMIARNFGKRFFSTKPSVLINKHTKVICQGFTGNQGTFHSKQAIEYGTNMVGGVSPGKGGQKHLDLPVFNTVKEAKEATGANATVIYVPPPHAAAAIKEAIDAEMELVVCITEGIPQQDMVKVKYLLNKQNKTRLIGPNCPGIIKPGECKIGIMPGHIHKPGKIGIVSRSGTLTYEAVAQTTAVGLGQSTCIGIGGDPFNGTNFIDCLKMFTQDPQTEGIILIGEIGGEAEEEAAQWLIDNPTDKPVVSFIAGLSAPPGRRMGHAGAIISGGKGDANSKIEALKAAGVTVTFSPAKLGETILQKMNEKKNK</sequence>
<feature type="transit peptide" description="Mitochondrion" evidence="1 2">
    <location>
        <begin position="1"/>
        <end position="16"/>
    </location>
</feature>
<feature type="chain" id="PRO_0000033338" description="Succinate--CoA ligase [ADP/GDP-forming] subunit alpha, mitochondrial" evidence="1">
    <location>
        <begin position="17"/>
        <end position="315"/>
    </location>
</feature>
<feature type="active site" description="Tele-phosphohistidine intermediate" evidence="1">
    <location>
        <position position="268"/>
    </location>
</feature>
<feature type="binding site" evidence="1">
    <location>
        <begin position="36"/>
        <end position="39"/>
    </location>
    <ligand>
        <name>CoA</name>
        <dbReference type="ChEBI" id="CHEBI:57287"/>
    </ligand>
</feature>
<feature type="binding site" evidence="1">
    <location>
        <position position="62"/>
    </location>
    <ligand>
        <name>CoA</name>
        <dbReference type="ChEBI" id="CHEBI:57287"/>
    </ligand>
</feature>
<feature type="binding site" evidence="1">
    <location>
        <begin position="115"/>
        <end position="117"/>
    </location>
    <ligand>
        <name>CoA</name>
        <dbReference type="ChEBI" id="CHEBI:57287"/>
    </ligand>
</feature>
<feature type="binding site" evidence="1">
    <location>
        <position position="179"/>
    </location>
    <ligand>
        <name>substrate</name>
        <note>ligand shared with subunit beta</note>
    </ligand>
</feature>
<feature type="sequence conflict" description="In Ref. 3; AA sequence." evidence="3" ref="3">
    <original>S</original>
    <variation>D</variation>
    <location>
        <position position="17"/>
    </location>
</feature>
<feature type="sequence conflict" description="In Ref. 1; AAA85724 and 3; AA sequence." evidence="3" ref="1 3">
    <original>H</original>
    <variation>N</variation>
    <location>
        <position position="27"/>
    </location>
</feature>
<feature type="sequence conflict" description="In Ref. 3; AA sequence." evidence="3" ref="3">
    <original>C</original>
    <variation>I</variation>
    <location>
        <position position="32"/>
    </location>
</feature>
<feature type="sequence conflict" description="In Ref. 1; AAA85724." evidence="3" ref="1">
    <original>V</original>
    <variation>A</variation>
    <location>
        <position position="72"/>
    </location>
</feature>
<feature type="sequence conflict" description="In Ref. 3; AA sequence." evidence="3" ref="3">
    <original>V</original>
    <variation>F</variation>
    <location>
        <position position="72"/>
    </location>
</feature>
<feature type="sequence conflict" description="In Ref. 3; AA sequence." evidence="3" ref="3">
    <original>T</original>
    <variation>G</variation>
    <location>
        <position position="75"/>
    </location>
</feature>
<feature type="sequence conflict" description="In Ref. 3; AA sequence." evidence="3" ref="3">
    <original>E</original>
    <variation>D</variation>
    <location>
        <position position="81"/>
    </location>
</feature>
<organism>
    <name type="scientific">Dictyostelium discoideum</name>
    <name type="common">Social amoeba</name>
    <dbReference type="NCBI Taxonomy" id="44689"/>
    <lineage>
        <taxon>Eukaryota</taxon>
        <taxon>Amoebozoa</taxon>
        <taxon>Evosea</taxon>
        <taxon>Eumycetozoa</taxon>
        <taxon>Dictyostelia</taxon>
        <taxon>Dictyosteliales</taxon>
        <taxon>Dictyosteliaceae</taxon>
        <taxon>Dictyostelium</taxon>
    </lineage>
</organism>
<protein>
    <recommendedName>
        <fullName evidence="1 4">Succinate--CoA ligase [ADP/GDP-forming] subunit alpha, mitochondrial</fullName>
        <ecNumber evidence="1 4">6.2.1.4</ecNumber>
        <ecNumber evidence="1">6.2.1.5</ecNumber>
    </recommendedName>
    <alternativeName>
        <fullName evidence="1">Succinyl-CoA synthetase subunit alpha</fullName>
        <shortName evidence="1">SCS-alpha</shortName>
    </alternativeName>
    <alternativeName>
        <fullName>p36</fullName>
    </alternativeName>
</protein>